<comment type="similarity">
    <text evidence="1">Belongs to the bacterial ribosomal protein bL32 family.</text>
</comment>
<keyword id="KW-0687">Ribonucleoprotein</keyword>
<keyword id="KW-0689">Ribosomal protein</keyword>
<evidence type="ECO:0000255" key="1">
    <source>
        <dbReference type="HAMAP-Rule" id="MF_00340"/>
    </source>
</evidence>
<evidence type="ECO:0000305" key="2"/>
<protein>
    <recommendedName>
        <fullName evidence="1">Large ribosomal subunit protein bL32</fullName>
    </recommendedName>
    <alternativeName>
        <fullName evidence="2">50S ribosomal protein L32</fullName>
    </alternativeName>
</protein>
<sequence length="60" mass="6808">MAVPARHTSKAKKNKRRTHYKLTAPSVKFDETTGDYSRSHRVSLKGYYKGRKIAKANAAE</sequence>
<dbReference type="EMBL" id="CP001129">
    <property type="protein sequence ID" value="ACG63216.1"/>
    <property type="molecule type" value="Genomic_DNA"/>
</dbReference>
<dbReference type="RefSeq" id="WP_012516460.1">
    <property type="nucleotide sequence ID" value="NC_011134.1"/>
</dbReference>
<dbReference type="SMR" id="B4U0K7"/>
<dbReference type="GeneID" id="83705791"/>
<dbReference type="KEGG" id="sez:Sez_1894"/>
<dbReference type="HOGENOM" id="CLU_129084_2_3_9"/>
<dbReference type="Proteomes" id="UP000001873">
    <property type="component" value="Chromosome"/>
</dbReference>
<dbReference type="GO" id="GO:0015934">
    <property type="term" value="C:large ribosomal subunit"/>
    <property type="evidence" value="ECO:0007669"/>
    <property type="project" value="InterPro"/>
</dbReference>
<dbReference type="GO" id="GO:0003735">
    <property type="term" value="F:structural constituent of ribosome"/>
    <property type="evidence" value="ECO:0007669"/>
    <property type="project" value="InterPro"/>
</dbReference>
<dbReference type="GO" id="GO:0006412">
    <property type="term" value="P:translation"/>
    <property type="evidence" value="ECO:0007669"/>
    <property type="project" value="UniProtKB-UniRule"/>
</dbReference>
<dbReference type="HAMAP" id="MF_00340">
    <property type="entry name" value="Ribosomal_bL32"/>
    <property type="match status" value="1"/>
</dbReference>
<dbReference type="InterPro" id="IPR002677">
    <property type="entry name" value="Ribosomal_bL32"/>
</dbReference>
<dbReference type="InterPro" id="IPR044957">
    <property type="entry name" value="Ribosomal_bL32_bact"/>
</dbReference>
<dbReference type="InterPro" id="IPR011332">
    <property type="entry name" value="Ribosomal_zn-bd"/>
</dbReference>
<dbReference type="NCBIfam" id="TIGR01031">
    <property type="entry name" value="rpmF_bact"/>
    <property type="match status" value="1"/>
</dbReference>
<dbReference type="PANTHER" id="PTHR35534">
    <property type="entry name" value="50S RIBOSOMAL PROTEIN L32"/>
    <property type="match status" value="1"/>
</dbReference>
<dbReference type="PANTHER" id="PTHR35534:SF1">
    <property type="entry name" value="LARGE RIBOSOMAL SUBUNIT PROTEIN BL32"/>
    <property type="match status" value="1"/>
</dbReference>
<dbReference type="Pfam" id="PF01783">
    <property type="entry name" value="Ribosomal_L32p"/>
    <property type="match status" value="1"/>
</dbReference>
<dbReference type="SUPFAM" id="SSF57829">
    <property type="entry name" value="Zn-binding ribosomal proteins"/>
    <property type="match status" value="1"/>
</dbReference>
<name>RL32_STREM</name>
<organism>
    <name type="scientific">Streptococcus equi subsp. zooepidemicus (strain MGCS10565)</name>
    <dbReference type="NCBI Taxonomy" id="552526"/>
    <lineage>
        <taxon>Bacteria</taxon>
        <taxon>Bacillati</taxon>
        <taxon>Bacillota</taxon>
        <taxon>Bacilli</taxon>
        <taxon>Lactobacillales</taxon>
        <taxon>Streptococcaceae</taxon>
        <taxon>Streptococcus</taxon>
    </lineage>
</organism>
<feature type="chain" id="PRO_1000120174" description="Large ribosomal subunit protein bL32">
    <location>
        <begin position="1"/>
        <end position="60"/>
    </location>
</feature>
<reference key="1">
    <citation type="journal article" date="2008" name="PLoS ONE">
        <title>Genome sequence of a lancefield group C Streptococcus zooepidemicus strain causing epidemic nephritis: new information about an old disease.</title>
        <authorList>
            <person name="Beres S.B."/>
            <person name="Sesso R."/>
            <person name="Pinto S.W.L."/>
            <person name="Hoe N.P."/>
            <person name="Porcella S.F."/>
            <person name="Deleo F.R."/>
            <person name="Musser J.M."/>
        </authorList>
    </citation>
    <scope>NUCLEOTIDE SEQUENCE [LARGE SCALE GENOMIC DNA]</scope>
    <source>
        <strain>MGCS10565</strain>
    </source>
</reference>
<accession>B4U0K7</accession>
<proteinExistence type="inferred from homology"/>
<gene>
    <name evidence="1" type="primary">rpmF</name>
    <name type="ordered locus">Sez_1894</name>
</gene>